<dbReference type="EC" id="2.7.4.9" evidence="1"/>
<dbReference type="EMBL" id="CP000969">
    <property type="protein sequence ID" value="ACB10051.1"/>
    <property type="molecule type" value="Genomic_DNA"/>
</dbReference>
<dbReference type="RefSeq" id="WP_012311296.1">
    <property type="nucleotide sequence ID" value="NC_010483.1"/>
</dbReference>
<dbReference type="SMR" id="B1L821"/>
<dbReference type="KEGG" id="trq:TRQ2_1717"/>
<dbReference type="HOGENOM" id="CLU_049131_0_2_0"/>
<dbReference type="Proteomes" id="UP000001687">
    <property type="component" value="Chromosome"/>
</dbReference>
<dbReference type="GO" id="GO:0005829">
    <property type="term" value="C:cytosol"/>
    <property type="evidence" value="ECO:0007669"/>
    <property type="project" value="TreeGrafter"/>
</dbReference>
<dbReference type="GO" id="GO:0005524">
    <property type="term" value="F:ATP binding"/>
    <property type="evidence" value="ECO:0007669"/>
    <property type="project" value="UniProtKB-UniRule"/>
</dbReference>
<dbReference type="GO" id="GO:0004798">
    <property type="term" value="F:dTMP kinase activity"/>
    <property type="evidence" value="ECO:0007669"/>
    <property type="project" value="UniProtKB-UniRule"/>
</dbReference>
<dbReference type="GO" id="GO:0006233">
    <property type="term" value="P:dTDP biosynthetic process"/>
    <property type="evidence" value="ECO:0007669"/>
    <property type="project" value="InterPro"/>
</dbReference>
<dbReference type="GO" id="GO:0006235">
    <property type="term" value="P:dTTP biosynthetic process"/>
    <property type="evidence" value="ECO:0007669"/>
    <property type="project" value="UniProtKB-UniRule"/>
</dbReference>
<dbReference type="GO" id="GO:0006227">
    <property type="term" value="P:dUDP biosynthetic process"/>
    <property type="evidence" value="ECO:0007669"/>
    <property type="project" value="TreeGrafter"/>
</dbReference>
<dbReference type="CDD" id="cd01672">
    <property type="entry name" value="TMPK"/>
    <property type="match status" value="1"/>
</dbReference>
<dbReference type="FunFam" id="3.40.50.300:FF:000225">
    <property type="entry name" value="Thymidylate kinase"/>
    <property type="match status" value="1"/>
</dbReference>
<dbReference type="Gene3D" id="3.40.50.300">
    <property type="entry name" value="P-loop containing nucleotide triphosphate hydrolases"/>
    <property type="match status" value="1"/>
</dbReference>
<dbReference type="HAMAP" id="MF_00165">
    <property type="entry name" value="Thymidylate_kinase"/>
    <property type="match status" value="1"/>
</dbReference>
<dbReference type="InterPro" id="IPR027417">
    <property type="entry name" value="P-loop_NTPase"/>
</dbReference>
<dbReference type="InterPro" id="IPR039430">
    <property type="entry name" value="Thymidylate_kin-like_dom"/>
</dbReference>
<dbReference type="InterPro" id="IPR018095">
    <property type="entry name" value="Thymidylate_kin_CS"/>
</dbReference>
<dbReference type="InterPro" id="IPR018094">
    <property type="entry name" value="Thymidylate_kinase"/>
</dbReference>
<dbReference type="NCBIfam" id="TIGR00041">
    <property type="entry name" value="DTMP_kinase"/>
    <property type="match status" value="1"/>
</dbReference>
<dbReference type="PANTHER" id="PTHR10344">
    <property type="entry name" value="THYMIDYLATE KINASE"/>
    <property type="match status" value="1"/>
</dbReference>
<dbReference type="PANTHER" id="PTHR10344:SF4">
    <property type="entry name" value="UMP-CMP KINASE 2, MITOCHONDRIAL"/>
    <property type="match status" value="1"/>
</dbReference>
<dbReference type="Pfam" id="PF02223">
    <property type="entry name" value="Thymidylate_kin"/>
    <property type="match status" value="1"/>
</dbReference>
<dbReference type="SUPFAM" id="SSF52540">
    <property type="entry name" value="P-loop containing nucleoside triphosphate hydrolases"/>
    <property type="match status" value="1"/>
</dbReference>
<dbReference type="PROSITE" id="PS01331">
    <property type="entry name" value="THYMIDYLATE_KINASE"/>
    <property type="match status" value="1"/>
</dbReference>
<keyword id="KW-0067">ATP-binding</keyword>
<keyword id="KW-0418">Kinase</keyword>
<keyword id="KW-0545">Nucleotide biosynthesis</keyword>
<keyword id="KW-0547">Nucleotide-binding</keyword>
<keyword id="KW-0808">Transferase</keyword>
<proteinExistence type="inferred from homology"/>
<comment type="function">
    <text evidence="1">Phosphorylation of dTMP to form dTDP in both de novo and salvage pathways of dTTP synthesis.</text>
</comment>
<comment type="catalytic activity">
    <reaction evidence="1">
        <text>dTMP + ATP = dTDP + ADP</text>
        <dbReference type="Rhea" id="RHEA:13517"/>
        <dbReference type="ChEBI" id="CHEBI:30616"/>
        <dbReference type="ChEBI" id="CHEBI:58369"/>
        <dbReference type="ChEBI" id="CHEBI:63528"/>
        <dbReference type="ChEBI" id="CHEBI:456216"/>
        <dbReference type="EC" id="2.7.4.9"/>
    </reaction>
</comment>
<comment type="similarity">
    <text evidence="1">Belongs to the thymidylate kinase family.</text>
</comment>
<reference key="1">
    <citation type="journal article" date="2011" name="J. Bacteriol.">
        <title>Genome sequence of Thermotoga sp. strain RQ2, a hyperthermophilic bacterium isolated from a geothermally heated region of the seafloor near Ribeira Quente, the Azores.</title>
        <authorList>
            <person name="Swithers K.S."/>
            <person name="DiPippo J.L."/>
            <person name="Bruce D.C."/>
            <person name="Detter C."/>
            <person name="Tapia R."/>
            <person name="Han S."/>
            <person name="Saunders E."/>
            <person name="Goodwin L.A."/>
            <person name="Han J."/>
            <person name="Woyke T."/>
            <person name="Pitluck S."/>
            <person name="Pennacchio L."/>
            <person name="Nolan M."/>
            <person name="Mikhailova N."/>
            <person name="Lykidis A."/>
            <person name="Land M.L."/>
            <person name="Brettin T."/>
            <person name="Stetter K.O."/>
            <person name="Nelson K.E."/>
            <person name="Gogarten J.P."/>
            <person name="Noll K.M."/>
        </authorList>
    </citation>
    <scope>NUCLEOTIDE SEQUENCE [LARGE SCALE GENOMIC DNA]</scope>
    <source>
        <strain>RQ2</strain>
    </source>
</reference>
<gene>
    <name evidence="1" type="primary">tmk</name>
    <name type="ordered locus">TRQ2_1717</name>
</gene>
<feature type="chain" id="PRO_1000097442" description="Thymidylate kinase">
    <location>
        <begin position="1"/>
        <end position="197"/>
    </location>
</feature>
<feature type="binding site" evidence="1">
    <location>
        <begin position="7"/>
        <end position="14"/>
    </location>
    <ligand>
        <name>ATP</name>
        <dbReference type="ChEBI" id="CHEBI:30616"/>
    </ligand>
</feature>
<sequence length="197" mass="22797">MFITFEGIDGSGKSTQIQLLAQYLEKRGKKVILKREPGGTETGEKIRKILLEEEVTPKAELFLFLASRNLLVTEIKQYLSEGYAVLLDRYTDSSVAYQGFGRNLGKEIVEELNDLATDGLIPDLTFYIDVDVETALKRKGELNRFEKREFLEHVREGYLVLAREHPERIVVLDGKRSIEEIHRDVVREVERRWKLDV</sequence>
<organism>
    <name type="scientific">Thermotoga sp. (strain RQ2)</name>
    <dbReference type="NCBI Taxonomy" id="126740"/>
    <lineage>
        <taxon>Bacteria</taxon>
        <taxon>Thermotogati</taxon>
        <taxon>Thermotogota</taxon>
        <taxon>Thermotogae</taxon>
        <taxon>Thermotogales</taxon>
        <taxon>Thermotogaceae</taxon>
        <taxon>Thermotoga</taxon>
    </lineage>
</organism>
<evidence type="ECO:0000255" key="1">
    <source>
        <dbReference type="HAMAP-Rule" id="MF_00165"/>
    </source>
</evidence>
<protein>
    <recommendedName>
        <fullName evidence="1">Thymidylate kinase</fullName>
        <ecNumber evidence="1">2.7.4.9</ecNumber>
    </recommendedName>
    <alternativeName>
        <fullName evidence="1">dTMP kinase</fullName>
    </alternativeName>
</protein>
<accession>B1L821</accession>
<name>KTHY_THESQ</name>